<protein>
    <recommendedName>
        <fullName>Mannan endo-1,4-beta-mannosidase 8</fullName>
        <ecNumber>3.2.1.78</ecNumber>
    </recommendedName>
    <alternativeName>
        <fullName>Beta-mannanase 8</fullName>
    </alternativeName>
    <alternativeName>
        <fullName>Endo-beta-1,4-mannanase 8</fullName>
    </alternativeName>
    <alternativeName>
        <fullName>OsMAN8</fullName>
    </alternativeName>
</protein>
<organism>
    <name type="scientific">Oryza sativa subsp. japonica</name>
    <name type="common">Rice</name>
    <dbReference type="NCBI Taxonomy" id="39947"/>
    <lineage>
        <taxon>Eukaryota</taxon>
        <taxon>Viridiplantae</taxon>
        <taxon>Streptophyta</taxon>
        <taxon>Embryophyta</taxon>
        <taxon>Tracheophyta</taxon>
        <taxon>Spermatophyta</taxon>
        <taxon>Magnoliopsida</taxon>
        <taxon>Liliopsida</taxon>
        <taxon>Poales</taxon>
        <taxon>Poaceae</taxon>
        <taxon>BOP clade</taxon>
        <taxon>Oryzoideae</taxon>
        <taxon>Oryzeae</taxon>
        <taxon>Oryzinae</taxon>
        <taxon>Oryza</taxon>
        <taxon>Oryza sativa</taxon>
    </lineage>
</organism>
<gene>
    <name type="primary">MAN8</name>
    <name type="ordered locus">Os12g0117300</name>
    <name type="ordered locus">LOC_Os12g02520</name>
</gene>
<name>MAN8_ORYSJ</name>
<proteinExistence type="evidence at transcript level"/>
<accession>Q0IQJ7</accession>
<accession>C7J9Y7</accession>
<accession>Q2QYI9</accession>
<comment type="catalytic activity">
    <reaction>
        <text>Random hydrolysis of (1-&gt;4)-beta-D-mannosidic linkages in mannans, galactomannans and glucomannans.</text>
        <dbReference type="EC" id="3.2.1.78"/>
    </reaction>
</comment>
<comment type="tissue specificity">
    <text evidence="3">Expressed in stems and leaves and seeds.</text>
</comment>
<comment type="similarity">
    <text evidence="4">Belongs to the glycosyl hydrolase 5 (cellulase A) family.</text>
</comment>
<comment type="sequence caution" evidence="4">
    <conflict type="erroneous gene model prediction">
        <sequence resource="EMBL-CDS" id="BAH95489"/>
    </conflict>
</comment>
<keyword id="KW-0326">Glycosidase</keyword>
<keyword id="KW-0378">Hydrolase</keyword>
<keyword id="KW-1185">Reference proteome</keyword>
<feature type="chain" id="PRO_0000277489" description="Mannan endo-1,4-beta-mannosidase 8">
    <location>
        <begin position="1"/>
        <end position="372"/>
    </location>
</feature>
<feature type="active site" description="Proton donor" evidence="2">
    <location>
        <position position="173"/>
    </location>
</feature>
<feature type="active site" description="Nucleophile" evidence="2">
    <location>
        <position position="293"/>
    </location>
</feature>
<feature type="binding site" evidence="1">
    <location>
        <position position="57"/>
    </location>
    <ligand>
        <name>substrate</name>
    </ligand>
</feature>
<feature type="binding site" evidence="1">
    <location>
        <position position="172"/>
    </location>
    <ligand>
        <name>substrate</name>
    </ligand>
</feature>
<feature type="binding site" evidence="1">
    <location>
        <position position="253"/>
    </location>
    <ligand>
        <name>substrate</name>
    </ligand>
</feature>
<feature type="binding site" evidence="1">
    <location>
        <position position="335"/>
    </location>
    <ligand>
        <name>substrate</name>
    </ligand>
</feature>
<reference key="1">
    <citation type="journal article" date="2005" name="BMC Biol.">
        <title>The sequence of rice chromosomes 11 and 12, rich in disease resistance genes and recent gene duplications.</title>
        <authorList>
            <consortium name="The rice chromosomes 11 and 12 sequencing consortia"/>
        </authorList>
    </citation>
    <scope>NUCLEOTIDE SEQUENCE [LARGE SCALE GENOMIC DNA]</scope>
    <source>
        <strain>cv. Nipponbare</strain>
    </source>
</reference>
<reference key="2">
    <citation type="journal article" date="2005" name="Nature">
        <title>The map-based sequence of the rice genome.</title>
        <authorList>
            <consortium name="International rice genome sequencing project (IRGSP)"/>
        </authorList>
    </citation>
    <scope>NUCLEOTIDE SEQUENCE [LARGE SCALE GENOMIC DNA]</scope>
    <source>
        <strain>cv. Nipponbare</strain>
    </source>
</reference>
<reference key="3">
    <citation type="journal article" date="2008" name="Nucleic Acids Res.">
        <title>The rice annotation project database (RAP-DB): 2008 update.</title>
        <authorList>
            <consortium name="The rice annotation project (RAP)"/>
        </authorList>
    </citation>
    <scope>GENOME REANNOTATION</scope>
    <source>
        <strain>cv. Nipponbare</strain>
    </source>
</reference>
<reference key="4">
    <citation type="journal article" date="2013" name="Rice">
        <title>Improvement of the Oryza sativa Nipponbare reference genome using next generation sequence and optical map data.</title>
        <authorList>
            <person name="Kawahara Y."/>
            <person name="de la Bastide M."/>
            <person name="Hamilton J.P."/>
            <person name="Kanamori H."/>
            <person name="McCombie W.R."/>
            <person name="Ouyang S."/>
            <person name="Schwartz D.C."/>
            <person name="Tanaka T."/>
            <person name="Wu J."/>
            <person name="Zhou S."/>
            <person name="Childs K.L."/>
            <person name="Davidson R.M."/>
            <person name="Lin H."/>
            <person name="Quesada-Ocampo L."/>
            <person name="Vaillancourt B."/>
            <person name="Sakai H."/>
            <person name="Lee S.S."/>
            <person name="Kim J."/>
            <person name="Numa H."/>
            <person name="Itoh T."/>
            <person name="Buell C.R."/>
            <person name="Matsumoto T."/>
        </authorList>
    </citation>
    <scope>GENOME REANNOTATION</scope>
    <source>
        <strain>cv. Nipponbare</strain>
    </source>
</reference>
<reference key="5">
    <citation type="journal article" date="2007" name="Funct. Integr. Genomics">
        <title>The endo-beta-mannanase gene families in Arabidopsis, rice, and poplar.</title>
        <authorList>
            <person name="Yuan J.S."/>
            <person name="Yang X."/>
            <person name="Lai J."/>
            <person name="Lin H."/>
            <person name="Cheng Z.-M."/>
            <person name="Nonogaki H."/>
            <person name="Chen F."/>
        </authorList>
    </citation>
    <scope>GENE FAMILY</scope>
    <scope>TISSUE SPECIFICITY</scope>
</reference>
<evidence type="ECO:0000250" key="1">
    <source>
        <dbReference type="UniProtKB" id="B4XC07"/>
    </source>
</evidence>
<evidence type="ECO:0000250" key="2">
    <source>
        <dbReference type="UniProtKB" id="Q99036"/>
    </source>
</evidence>
<evidence type="ECO:0000269" key="3">
    <source>
    </source>
</evidence>
<evidence type="ECO:0000305" key="4"/>
<dbReference type="EC" id="3.2.1.78"/>
<dbReference type="EMBL" id="DP000011">
    <property type="protein sequence ID" value="ABA95648.1"/>
    <property type="molecule type" value="Genomic_DNA"/>
</dbReference>
<dbReference type="EMBL" id="AP008218">
    <property type="protein sequence ID" value="BAH95489.1"/>
    <property type="status" value="ALT_SEQ"/>
    <property type="molecule type" value="Genomic_DNA"/>
</dbReference>
<dbReference type="EMBL" id="AP014968">
    <property type="status" value="NOT_ANNOTATED_CDS"/>
    <property type="molecule type" value="Genomic_DNA"/>
</dbReference>
<dbReference type="SMR" id="Q0IQJ7"/>
<dbReference type="FunCoup" id="Q0IQJ7">
    <property type="interactions" value="8"/>
</dbReference>
<dbReference type="STRING" id="39947.Q0IQJ7"/>
<dbReference type="CAZy" id="GH5">
    <property type="family name" value="Glycoside Hydrolase Family 5"/>
</dbReference>
<dbReference type="PaxDb" id="39947-Q0IQJ7"/>
<dbReference type="KEGG" id="dosa:Os12g0117250"/>
<dbReference type="eggNOG" id="ENOG502RDYC">
    <property type="taxonomic scope" value="Eukaryota"/>
</dbReference>
<dbReference type="InParanoid" id="Q0IQJ7"/>
<dbReference type="Proteomes" id="UP000000763">
    <property type="component" value="Chromosome 12"/>
</dbReference>
<dbReference type="Proteomes" id="UP000059680">
    <property type="component" value="Chromosome 12"/>
</dbReference>
<dbReference type="GO" id="GO:0016985">
    <property type="term" value="F:mannan endo-1,4-beta-mannosidase activity"/>
    <property type="evidence" value="ECO:0000318"/>
    <property type="project" value="GO_Central"/>
</dbReference>
<dbReference type="GO" id="GO:0000272">
    <property type="term" value="P:polysaccharide catabolic process"/>
    <property type="evidence" value="ECO:0007669"/>
    <property type="project" value="InterPro"/>
</dbReference>
<dbReference type="FunFam" id="3.20.20.80:FF:000012">
    <property type="entry name" value="Mannan endo-1,4-beta-mannosidase 6"/>
    <property type="match status" value="1"/>
</dbReference>
<dbReference type="Gene3D" id="3.20.20.80">
    <property type="entry name" value="Glycosidases"/>
    <property type="match status" value="1"/>
</dbReference>
<dbReference type="InterPro" id="IPR001547">
    <property type="entry name" value="Glyco_hydro_5"/>
</dbReference>
<dbReference type="InterPro" id="IPR018087">
    <property type="entry name" value="Glyco_hydro_5_CS"/>
</dbReference>
<dbReference type="InterPro" id="IPR017853">
    <property type="entry name" value="Glycoside_hydrolase_SF"/>
</dbReference>
<dbReference type="InterPro" id="IPR045053">
    <property type="entry name" value="MAN-like"/>
</dbReference>
<dbReference type="PANTHER" id="PTHR31451">
    <property type="match status" value="1"/>
</dbReference>
<dbReference type="PANTHER" id="PTHR31451:SF46">
    <property type="entry name" value="MANNAN ENDO-1,4-BETA-MANNOSIDASE 8"/>
    <property type="match status" value="1"/>
</dbReference>
<dbReference type="Pfam" id="PF00150">
    <property type="entry name" value="Cellulase"/>
    <property type="match status" value="1"/>
</dbReference>
<dbReference type="SUPFAM" id="SSF51445">
    <property type="entry name" value="(Trans)glycosidases"/>
    <property type="match status" value="1"/>
</dbReference>
<dbReference type="PROSITE" id="PS00659">
    <property type="entry name" value="GLYCOSYL_HYDROL_F5"/>
    <property type="match status" value="1"/>
</dbReference>
<sequence>MVECSGTQLWASGRPFIIHGFNTYWLMSFAADQATRPRVTAAIAEAAEAGLNVCRTWAFSDGGYRALQTVPFHYDEDVFQALDFVVSEAKRHNMRLILSLCNNWEDYGGKAQYVRWGKEAGLDLTSEDDFFSDPTIKSYYKAFVEAVVTRINTVTNETYKDDPTILAWELINEPRCPSDPSGDTLQAWIEEMASYVKSIDPVHLLEIGIEGFYGLSTPELLPVNPDEYSGHAGTDFIRNHQAPGIDLASIHVYSDTWLPHSIKENHLQFVDKWMQQHIHDAANLLGMPIVVGEFGVSVKDGKFGNEFREDFMKTVYRIFLSSWKEGVIGGGCLLWQLFPEGAEHMDDGYAVIFAKSPSTLSLLANHLRCLEC</sequence>